<organism>
    <name type="scientific">Rhodopseudomonas palustris (strain BisB18)</name>
    <dbReference type="NCBI Taxonomy" id="316056"/>
    <lineage>
        <taxon>Bacteria</taxon>
        <taxon>Pseudomonadati</taxon>
        <taxon>Pseudomonadota</taxon>
        <taxon>Alphaproteobacteria</taxon>
        <taxon>Hyphomicrobiales</taxon>
        <taxon>Nitrobacteraceae</taxon>
        <taxon>Rhodopseudomonas</taxon>
    </lineage>
</organism>
<evidence type="ECO:0000255" key="1">
    <source>
        <dbReference type="HAMAP-Rule" id="MF_01342"/>
    </source>
</evidence>
<evidence type="ECO:0000305" key="2"/>
<feature type="chain" id="PRO_0000251662" description="Large ribosomal subunit protein uL16">
    <location>
        <begin position="1"/>
        <end position="137"/>
    </location>
</feature>
<name>RL16_RHOPB</name>
<proteinExistence type="inferred from homology"/>
<dbReference type="EMBL" id="CP000301">
    <property type="protein sequence ID" value="ABD88981.1"/>
    <property type="molecule type" value="Genomic_DNA"/>
</dbReference>
<dbReference type="SMR" id="Q211F5"/>
<dbReference type="STRING" id="316056.RPC_3441"/>
<dbReference type="KEGG" id="rpc:RPC_3441"/>
<dbReference type="eggNOG" id="COG0197">
    <property type="taxonomic scope" value="Bacteria"/>
</dbReference>
<dbReference type="HOGENOM" id="CLU_078858_2_1_5"/>
<dbReference type="OrthoDB" id="9802589at2"/>
<dbReference type="GO" id="GO:0022625">
    <property type="term" value="C:cytosolic large ribosomal subunit"/>
    <property type="evidence" value="ECO:0007669"/>
    <property type="project" value="TreeGrafter"/>
</dbReference>
<dbReference type="GO" id="GO:0019843">
    <property type="term" value="F:rRNA binding"/>
    <property type="evidence" value="ECO:0007669"/>
    <property type="project" value="UniProtKB-UniRule"/>
</dbReference>
<dbReference type="GO" id="GO:0003735">
    <property type="term" value="F:structural constituent of ribosome"/>
    <property type="evidence" value="ECO:0007669"/>
    <property type="project" value="InterPro"/>
</dbReference>
<dbReference type="GO" id="GO:0000049">
    <property type="term" value="F:tRNA binding"/>
    <property type="evidence" value="ECO:0007669"/>
    <property type="project" value="UniProtKB-KW"/>
</dbReference>
<dbReference type="GO" id="GO:0006412">
    <property type="term" value="P:translation"/>
    <property type="evidence" value="ECO:0007669"/>
    <property type="project" value="UniProtKB-UniRule"/>
</dbReference>
<dbReference type="CDD" id="cd01433">
    <property type="entry name" value="Ribosomal_L16_L10e"/>
    <property type="match status" value="1"/>
</dbReference>
<dbReference type="FunFam" id="3.90.1170.10:FF:000001">
    <property type="entry name" value="50S ribosomal protein L16"/>
    <property type="match status" value="1"/>
</dbReference>
<dbReference type="Gene3D" id="3.90.1170.10">
    <property type="entry name" value="Ribosomal protein L10e/L16"/>
    <property type="match status" value="1"/>
</dbReference>
<dbReference type="HAMAP" id="MF_01342">
    <property type="entry name" value="Ribosomal_uL16"/>
    <property type="match status" value="1"/>
</dbReference>
<dbReference type="InterPro" id="IPR047873">
    <property type="entry name" value="Ribosomal_uL16"/>
</dbReference>
<dbReference type="InterPro" id="IPR000114">
    <property type="entry name" value="Ribosomal_uL16_bact-type"/>
</dbReference>
<dbReference type="InterPro" id="IPR020798">
    <property type="entry name" value="Ribosomal_uL16_CS"/>
</dbReference>
<dbReference type="InterPro" id="IPR016180">
    <property type="entry name" value="Ribosomal_uL16_dom"/>
</dbReference>
<dbReference type="InterPro" id="IPR036920">
    <property type="entry name" value="Ribosomal_uL16_sf"/>
</dbReference>
<dbReference type="NCBIfam" id="TIGR01164">
    <property type="entry name" value="rplP_bact"/>
    <property type="match status" value="1"/>
</dbReference>
<dbReference type="PANTHER" id="PTHR12220">
    <property type="entry name" value="50S/60S RIBOSOMAL PROTEIN L16"/>
    <property type="match status" value="1"/>
</dbReference>
<dbReference type="PANTHER" id="PTHR12220:SF13">
    <property type="entry name" value="LARGE RIBOSOMAL SUBUNIT PROTEIN UL16M"/>
    <property type="match status" value="1"/>
</dbReference>
<dbReference type="Pfam" id="PF00252">
    <property type="entry name" value="Ribosomal_L16"/>
    <property type="match status" value="1"/>
</dbReference>
<dbReference type="PRINTS" id="PR00060">
    <property type="entry name" value="RIBOSOMALL16"/>
</dbReference>
<dbReference type="SUPFAM" id="SSF54686">
    <property type="entry name" value="Ribosomal protein L16p/L10e"/>
    <property type="match status" value="1"/>
</dbReference>
<dbReference type="PROSITE" id="PS00586">
    <property type="entry name" value="RIBOSOMAL_L16_1"/>
    <property type="match status" value="1"/>
</dbReference>
<dbReference type="PROSITE" id="PS00701">
    <property type="entry name" value="RIBOSOMAL_L16_2"/>
    <property type="match status" value="1"/>
</dbReference>
<gene>
    <name evidence="1" type="primary">rplP</name>
    <name type="ordered locus">RPC_3441</name>
</gene>
<sequence length="137" mass="15165">MMQPKKTKFRKAHKGRIHGVATSGATLSFGQFGLKAMAPERITARQIEAARRALTRHMKRAGRVWIRIFPDLPVSKKPAEVRMGSGKGTPELWVARVKPGRVIFEIDGVNVQVAKEALTLAAAKLPIKTRFVARIAE</sequence>
<accession>Q211F5</accession>
<keyword id="KW-0687">Ribonucleoprotein</keyword>
<keyword id="KW-0689">Ribosomal protein</keyword>
<keyword id="KW-0694">RNA-binding</keyword>
<keyword id="KW-0699">rRNA-binding</keyword>
<keyword id="KW-0820">tRNA-binding</keyword>
<protein>
    <recommendedName>
        <fullName evidence="1">Large ribosomal subunit protein uL16</fullName>
    </recommendedName>
    <alternativeName>
        <fullName evidence="2">50S ribosomal protein L16</fullName>
    </alternativeName>
</protein>
<reference key="1">
    <citation type="submission" date="2006-03" db="EMBL/GenBank/DDBJ databases">
        <title>Complete sequence of Rhodopseudomonas palustris BisB18.</title>
        <authorList>
            <consortium name="US DOE Joint Genome Institute"/>
            <person name="Copeland A."/>
            <person name="Lucas S."/>
            <person name="Lapidus A."/>
            <person name="Barry K."/>
            <person name="Detter J.C."/>
            <person name="Glavina del Rio T."/>
            <person name="Hammon N."/>
            <person name="Israni S."/>
            <person name="Dalin E."/>
            <person name="Tice H."/>
            <person name="Pitluck S."/>
            <person name="Chain P."/>
            <person name="Malfatti S."/>
            <person name="Shin M."/>
            <person name="Vergez L."/>
            <person name="Schmutz J."/>
            <person name="Larimer F."/>
            <person name="Land M."/>
            <person name="Hauser L."/>
            <person name="Pelletier D.A."/>
            <person name="Kyrpides N."/>
            <person name="Anderson I."/>
            <person name="Oda Y."/>
            <person name="Harwood C.S."/>
            <person name="Richardson P."/>
        </authorList>
    </citation>
    <scope>NUCLEOTIDE SEQUENCE [LARGE SCALE GENOMIC DNA]</scope>
    <source>
        <strain>BisB18</strain>
    </source>
</reference>
<comment type="function">
    <text evidence="1">Binds 23S rRNA and is also seen to make contacts with the A and possibly P site tRNAs.</text>
</comment>
<comment type="subunit">
    <text evidence="1">Part of the 50S ribosomal subunit.</text>
</comment>
<comment type="similarity">
    <text evidence="1">Belongs to the universal ribosomal protein uL16 family.</text>
</comment>